<dbReference type="EC" id="3.4.21.97" evidence="1 3"/>
<dbReference type="EMBL" id="X17403">
    <property type="protein sequence ID" value="CAA35353.1"/>
    <property type="molecule type" value="Genomic_DNA"/>
</dbReference>
<dbReference type="EMBL" id="X17403">
    <property type="protein sequence ID" value="CAA35354.1"/>
    <property type="status" value="ALT_INIT"/>
    <property type="molecule type" value="Genomic_DNA"/>
</dbReference>
<dbReference type="EMBL" id="BK000394">
    <property type="protein sequence ID" value="DAA00177.1"/>
    <property type="molecule type" value="Genomic_DNA"/>
</dbReference>
<dbReference type="EMBL" id="BK000394">
    <property type="protein sequence ID" value="DAA00178.1"/>
    <property type="molecule type" value="Genomic_DNA"/>
</dbReference>
<dbReference type="PIR" id="S09843">
    <property type="entry name" value="QQBEB8"/>
</dbReference>
<dbReference type="PDB" id="1CMV">
    <property type="method" value="X-ray"/>
    <property type="resolution" value="2.27 A"/>
    <property type="chains" value="A/B=1-256"/>
</dbReference>
<dbReference type="PDB" id="1ID4">
    <property type="method" value="X-ray"/>
    <property type="resolution" value="2.20 A"/>
    <property type="chains" value="A/B=1-256"/>
</dbReference>
<dbReference type="PDB" id="1IEC">
    <property type="method" value="X-ray"/>
    <property type="resolution" value="2.20 A"/>
    <property type="chains" value="A/B=1-256"/>
</dbReference>
<dbReference type="PDB" id="1IED">
    <property type="method" value="X-ray"/>
    <property type="resolution" value="2.00 A"/>
    <property type="chains" value="A/B=1-256"/>
</dbReference>
<dbReference type="PDB" id="1IEF">
    <property type="method" value="X-ray"/>
    <property type="resolution" value="2.30 A"/>
    <property type="chains" value="A/B=1-256"/>
</dbReference>
<dbReference type="PDB" id="1IEG">
    <property type="method" value="X-ray"/>
    <property type="resolution" value="2.00 A"/>
    <property type="chains" value="A/B=1-256"/>
</dbReference>
<dbReference type="PDB" id="1JQ6">
    <property type="method" value="X-ray"/>
    <property type="resolution" value="2.30 A"/>
    <property type="chains" value="A=1-256"/>
</dbReference>
<dbReference type="PDB" id="1JQ7">
    <property type="method" value="X-ray"/>
    <property type="resolution" value="3.00 A"/>
    <property type="chains" value="A/B=1-256"/>
</dbReference>
<dbReference type="PDB" id="1LAY">
    <property type="method" value="X-ray"/>
    <property type="resolution" value="2.50 A"/>
    <property type="chains" value="A=1-256"/>
</dbReference>
<dbReference type="PDB" id="1NJT">
    <property type="method" value="X-ray"/>
    <property type="resolution" value="2.50 A"/>
    <property type="chains" value="A/B/C/D=1-256"/>
</dbReference>
<dbReference type="PDB" id="1NJU">
    <property type="method" value="X-ray"/>
    <property type="resolution" value="2.70 A"/>
    <property type="chains" value="A/B/C/D=1-256"/>
</dbReference>
<dbReference type="PDB" id="1NKK">
    <property type="method" value="X-ray"/>
    <property type="resolution" value="2.60 A"/>
    <property type="chains" value="A/B/C/D=1-256"/>
</dbReference>
<dbReference type="PDB" id="1NKM">
    <property type="method" value="X-ray"/>
    <property type="resolution" value="2.70 A"/>
    <property type="chains" value="A/B=1-256"/>
</dbReference>
<dbReference type="PDB" id="1WPO">
    <property type="method" value="X-ray"/>
    <property type="resolution" value="2.00 A"/>
    <property type="chains" value="A/B=1-256"/>
</dbReference>
<dbReference type="PDB" id="2WPO">
    <property type="method" value="X-ray"/>
    <property type="resolution" value="2.70 A"/>
    <property type="chains" value="A/B/C/D=1-256"/>
</dbReference>
<dbReference type="PDB" id="7TCZ">
    <property type="method" value="X-ray"/>
    <property type="resolution" value="2.67 A"/>
    <property type="chains" value="A=1-256"/>
</dbReference>
<dbReference type="PDB" id="8J3S">
    <property type="method" value="X-ray"/>
    <property type="resolution" value="3.09 A"/>
    <property type="chains" value="A/B/C/D=1-256"/>
</dbReference>
<dbReference type="PDB" id="8J3T">
    <property type="method" value="X-ray"/>
    <property type="resolution" value="2.90 A"/>
    <property type="chains" value="A/B=1-256"/>
</dbReference>
<dbReference type="PDBsum" id="1CMV"/>
<dbReference type="PDBsum" id="1ID4"/>
<dbReference type="PDBsum" id="1IEC"/>
<dbReference type="PDBsum" id="1IED"/>
<dbReference type="PDBsum" id="1IEF"/>
<dbReference type="PDBsum" id="1IEG"/>
<dbReference type="PDBsum" id="1JQ6"/>
<dbReference type="PDBsum" id="1JQ7"/>
<dbReference type="PDBsum" id="1LAY"/>
<dbReference type="PDBsum" id="1NJT"/>
<dbReference type="PDBsum" id="1NJU"/>
<dbReference type="PDBsum" id="1NKK"/>
<dbReference type="PDBsum" id="1NKM"/>
<dbReference type="PDBsum" id="1WPO"/>
<dbReference type="PDBsum" id="2WPO"/>
<dbReference type="PDBsum" id="7TCZ"/>
<dbReference type="PDBsum" id="8J3S"/>
<dbReference type="PDBsum" id="8J3T"/>
<dbReference type="SMR" id="P16753"/>
<dbReference type="BindingDB" id="P16753"/>
<dbReference type="ChEMBL" id="CHEMBL3771"/>
<dbReference type="DrugBank" id="DB07436">
    <property type="generic name" value="N-(1-PHENYL-PROPYL)-FORMAMIDE"/>
</dbReference>
<dbReference type="DrugBank" id="DB01973">
    <property type="generic name" value="O-Benzylsulfonyl-Serine"/>
</dbReference>
<dbReference type="DrugBank" id="DB03963">
    <property type="generic name" value="S-(Dimethylarsenic)Cysteine"/>
</dbReference>
<dbReference type="MEROPS" id="S21.002"/>
<dbReference type="EvolutionaryTrace" id="P16753"/>
<dbReference type="Proteomes" id="UP000008991">
    <property type="component" value="Segment"/>
</dbReference>
<dbReference type="Proteomes" id="UP000008992">
    <property type="component" value="Segment"/>
</dbReference>
<dbReference type="GO" id="GO:0030430">
    <property type="term" value="C:host cell cytoplasm"/>
    <property type="evidence" value="ECO:0007669"/>
    <property type="project" value="UniProtKB-SubCell"/>
</dbReference>
<dbReference type="GO" id="GO:0042025">
    <property type="term" value="C:host cell nucleus"/>
    <property type="evidence" value="ECO:0007669"/>
    <property type="project" value="UniProtKB-SubCell"/>
</dbReference>
<dbReference type="GO" id="GO:0042802">
    <property type="term" value="F:identical protein binding"/>
    <property type="evidence" value="ECO:0007669"/>
    <property type="project" value="UniProtKB-UniRule"/>
</dbReference>
<dbReference type="GO" id="GO:0004252">
    <property type="term" value="F:serine-type endopeptidase activity"/>
    <property type="evidence" value="ECO:0007669"/>
    <property type="project" value="UniProtKB-UniRule"/>
</dbReference>
<dbReference type="GO" id="GO:0039708">
    <property type="term" value="P:nuclear capsid assembly"/>
    <property type="evidence" value="ECO:0007669"/>
    <property type="project" value="UniProtKB-ARBA"/>
</dbReference>
<dbReference type="GO" id="GO:0006508">
    <property type="term" value="P:proteolysis"/>
    <property type="evidence" value="ECO:0007669"/>
    <property type="project" value="UniProtKB-KW"/>
</dbReference>
<dbReference type="GO" id="GO:0019076">
    <property type="term" value="P:viral release from host cell"/>
    <property type="evidence" value="ECO:0007669"/>
    <property type="project" value="UniProtKB-UniRule"/>
</dbReference>
<dbReference type="FunFam" id="3.20.16.10:FF:000001">
    <property type="entry name" value="Capsid scaffolding protein"/>
    <property type="match status" value="1"/>
</dbReference>
<dbReference type="Gene3D" id="3.20.16.10">
    <property type="entry name" value="Herpesvirus/Caudovirus protease domain"/>
    <property type="match status" value="1"/>
</dbReference>
<dbReference type="HAMAP" id="MF_04008">
    <property type="entry name" value="HSV_SCAF"/>
    <property type="match status" value="1"/>
</dbReference>
<dbReference type="InterPro" id="IPR035443">
    <property type="entry name" value="Herpes_virus_sf"/>
</dbReference>
<dbReference type="InterPro" id="IPR001847">
    <property type="entry name" value="Peptidase_S21"/>
</dbReference>
<dbReference type="Pfam" id="PF00716">
    <property type="entry name" value="Peptidase_S21"/>
    <property type="match status" value="1"/>
</dbReference>
<dbReference type="PRINTS" id="PR00236">
    <property type="entry name" value="HSVCAPSIDP40"/>
</dbReference>
<dbReference type="SUPFAM" id="SSF50789">
    <property type="entry name" value="Herpes virus serine proteinase, assemblin"/>
    <property type="match status" value="1"/>
</dbReference>
<accession>P16753</accession>
<accession>Q69030</accession>
<accession>Q7M6L0</accession>
<accession>Q7M6L1</accession>
<organismHost>
    <name type="scientific">Homo sapiens</name>
    <name type="common">Human</name>
    <dbReference type="NCBI Taxonomy" id="9606"/>
</organismHost>
<sequence>MTMDEQQSQAVAPVYVGGFLARYDQSPDEAELLLPRDVVEHWLHAQGQGQPSLSVALPLNINHDDTAVVGHVAAMQSVRDGLFCLGCVTSPRFLEIVRRASEKSELVSRGPVSPLQPDKVVEFLSGSYAGLSLSSRRCDDVEAATSLSGSETTPFKHVALCSVGRRRGTLAVYGRDPEWVTQRFPDLTAADRDGLRAQWQRCGSTAVDASGDPFRSDSYGLLGNSVDALYIRERLPKLRYDKQLVGVTERESYVKASVSPEAACDIKAASAERSGDSRSQAATPAAGARVPSSSPSPPVEPPSPVQPPALPASPSVLPAESPPSLSPSEPAEAASMSHPLSAAVPAATAPPGATVAGASPAVSSLAWPHDGVYLPKDAFFSLLGASRSAVPVMYPGAVAAPPSASPAPLPLPSYPASYGAPVVGYDQLAARHFADYVDPHYPGWGRRYEPAPSLHPSYPVPPPPSPAYYRRRDSPGGMDEPPSGWERYDGGHRGQSQKQHRHGGSGGHNKRRKETAAASSSSSDEDLSFPGEAEHGRARKRLKSHVNSDGGSGGHAGSNQQQQQRYDELRDAIHELKRDLFAARQSSTLLSAALPSAASSSPTTTTVCTPTGELTSGGGETPTALLSGGAKVAERAQAGVVNASCRLATASGSEAATAGPSTAGSSSCPASVVLAAAAAQAAAASQSPPKDMVDLNRRIFVAALNKLE</sequence>
<comment type="function">
    <molecule>Capsid scaffolding protein</molecule>
    <text evidence="1">Acts as a scaffold protein by binding major capsid protein in the cytoplasm, inducing the nuclear localization of both proteins. Multimerizes in the nucleus such as major capsid protein forms the icosahedral T=16 capsid. Autocatalytic cleavage releases the assembly protein, and subsequently abolishes interaction with major capsid protein. Cleavages products are evicted from the capsid before or during DNA packaging.</text>
</comment>
<comment type="function">
    <molecule>Assemblin</molecule>
    <text evidence="1">Protease that plays an essential role in virion assembly within the nucleus. Catalyzes the cleavage of the assembly protein after formation of the spherical procapsid. By that cleavage, the capsid matures and gains its icosahedral shape. The cleavage sites seem to include -Ala-Ser-, -Ala-Ala-, as well as Ala-Thr bonds. Assemblin and cleavages products are evicted from the capsid before or during DNA packaging.</text>
</comment>
<comment type="function">
    <molecule>Assembly protein</molecule>
    <text evidence="1">Plays a major role in capsid assembly. Acts as a scaffold protein by binding major capsid protein. Multimerizes in the nucleus such as major capsid protein forms the icosahedral T=16 capsid. Cleaved by assemblin after capsid completion. The cleavages products are evicted from the capsid before or during DNA packaging.</text>
</comment>
<comment type="catalytic activity">
    <molecule>Assemblin</molecule>
    <reaction evidence="1 3">
        <text>Cleaves -Ala-|-Ser- and -Ala-|-Ala- bonds in the scaffold protein.</text>
        <dbReference type="EC" id="3.4.21.97"/>
    </reaction>
</comment>
<comment type="biophysicochemical properties">
    <molecule>Assemblin</molecule>
    <kinetics>
        <KM evidence="3">10.1 uM for 4-(4c-dimethylaminophenylazo) benzoyl-Arg-Gly-Val-Val-Asn-Ala-V-Ser-Ser- Arg-Leu-Ala-(2c-aminoethyl)amino-naphthalene-1-sulfonic acid</KM>
        <text>KM is 10.7 uM according to PubMed:12549906.</text>
    </kinetics>
</comment>
<comment type="subunit">
    <molecule>Capsid scaffolding protein</molecule>
    <text evidence="1">Homomultimer. Interacts with major capsid protein.</text>
</comment>
<comment type="subunit">
    <molecule>Assemblin</molecule>
    <text evidence="1 3 4">Exists in a monomer-dimer equilibrium with the dimer being the active species.</text>
</comment>
<comment type="subunit">
    <molecule>Assembly protein</molecule>
    <text evidence="1">Homomultimer. Interacts with major capsid protein.</text>
</comment>
<comment type="subcellular location">
    <molecule>Capsid scaffolding protein</molecule>
    <subcellularLocation>
        <location evidence="1">Host cytoplasm</location>
    </subcellularLocation>
</comment>
<comment type="subcellular location">
    <molecule>Assemblin</molecule>
    <subcellularLocation>
        <location evidence="1">Host nucleus</location>
    </subcellularLocation>
</comment>
<comment type="subcellular location">
    <molecule>Assembly protein</molecule>
    <subcellularLocation>
        <location evidence="1">Host nucleus</location>
    </subcellularLocation>
</comment>
<comment type="alternative products">
    <event type="alternative promoter"/>
    <isoform>
        <id>P16753-1</id>
        <name>Capsid scaffolding protein</name>
        <name>pPR</name>
        <name>UL80a</name>
        <sequence type="displayed"/>
    </isoform>
    <isoform>
        <id>P16753-2</id>
        <name>pAP</name>
        <name>Assembly protein</name>
        <name>UL80.5</name>
        <sequence type="described" ref="VSP_037423"/>
    </isoform>
    <isoform>
        <id>P16753-3</id>
        <name>UL80.4 protein</name>
        <sequence type="described" ref="VSP_037424"/>
    </isoform>
    <isoform>
        <id>P16753-4</id>
        <name>UL80.3 protein</name>
        <sequence type="described" ref="VSP_037425"/>
    </isoform>
</comment>
<comment type="domain">
    <text evidence="1">Region of interaction between pPR and pAP is called Amino conserved domain (ACD). The region of interaction with major capsid protein is called carboxyl conserved domain (CCD).</text>
</comment>
<comment type="PTM">
    <molecule>Capsid scaffolding protein</molecule>
    <text evidence="1">Capsid scaffolding protein is cleaved by assemblin after formation of the spherical procapsid. As a result, the capsid obtains its mature, icosahedral shape. Cleavages occur at two or more sites: release (R-site) and maturation (M-site).</text>
</comment>
<comment type="similarity">
    <text evidence="1">Belongs to the herpesviridae capsid scaffolding protein family.</text>
</comment>
<comment type="sequence caution" evidence="8">
    <conflict type="erroneous initiation">
        <sequence resource="EMBL-CDS" id="CAA35354"/>
    </conflict>
</comment>
<protein>
    <recommendedName>
        <fullName evidence="1">Capsid scaffolding protein</fullName>
    </recommendedName>
    <alternativeName>
        <fullName evidence="1">Protease precursor</fullName>
        <shortName evidence="1">pPR</shortName>
    </alternativeName>
    <component>
        <recommendedName>
            <fullName evidence="1">Assemblin</fullName>
            <ecNumber evidence="1 3">3.4.21.97</ecNumber>
        </recommendedName>
        <alternativeName>
            <fullName evidence="1">Protease</fullName>
            <shortName evidence="1">Pr</shortName>
        </alternativeName>
    </component>
    <component>
        <recommendedName>
            <fullName evidence="1">Assembly protein</fullName>
            <shortName evidence="1">AP</shortName>
        </recommendedName>
        <alternativeName>
            <fullName evidence="1">Capsid assembly protein</fullName>
        </alternativeName>
    </component>
</protein>
<name>SCAF_HCMVA</name>
<evidence type="ECO:0000255" key="1">
    <source>
        <dbReference type="HAMAP-Rule" id="MF_04008"/>
    </source>
</evidence>
<evidence type="ECO:0000256" key="2">
    <source>
        <dbReference type="SAM" id="MobiDB-lite"/>
    </source>
</evidence>
<evidence type="ECO:0000269" key="3">
    <source>
    </source>
</evidence>
<evidence type="ECO:0000269" key="4">
    <source>
    </source>
</evidence>
<evidence type="ECO:0000269" key="5">
    <source>
    </source>
</evidence>
<evidence type="ECO:0000269" key="6">
    <source>
    </source>
</evidence>
<evidence type="ECO:0000269" key="7">
    <source>
    </source>
</evidence>
<evidence type="ECO:0000305" key="8"/>
<evidence type="ECO:0007744" key="9">
    <source>
        <dbReference type="PDB" id="1ID4"/>
    </source>
</evidence>
<evidence type="ECO:0007744" key="10">
    <source>
        <dbReference type="PDB" id="1IEC"/>
    </source>
</evidence>
<evidence type="ECO:0007744" key="11">
    <source>
        <dbReference type="PDB" id="1IED"/>
    </source>
</evidence>
<evidence type="ECO:0007744" key="12">
    <source>
        <dbReference type="PDB" id="1IEF"/>
    </source>
</evidence>
<evidence type="ECO:0007744" key="13">
    <source>
        <dbReference type="PDB" id="1IEG"/>
    </source>
</evidence>
<evidence type="ECO:0007744" key="14">
    <source>
        <dbReference type="PDB" id="1JQ6"/>
    </source>
</evidence>
<evidence type="ECO:0007744" key="15">
    <source>
        <dbReference type="PDB" id="1JQ7"/>
    </source>
</evidence>
<evidence type="ECO:0007744" key="16">
    <source>
        <dbReference type="PDB" id="1LAY"/>
    </source>
</evidence>
<evidence type="ECO:0007744" key="17">
    <source>
        <dbReference type="PDB" id="1NJT"/>
    </source>
</evidence>
<evidence type="ECO:0007744" key="18">
    <source>
        <dbReference type="PDB" id="1NJU"/>
    </source>
</evidence>
<evidence type="ECO:0007744" key="19">
    <source>
        <dbReference type="PDB" id="1NKK"/>
    </source>
</evidence>
<evidence type="ECO:0007744" key="20">
    <source>
        <dbReference type="PDB" id="1NKM"/>
    </source>
</evidence>
<evidence type="ECO:0007744" key="21">
    <source>
        <dbReference type="PDB" id="1WPO"/>
    </source>
</evidence>
<evidence type="ECO:0007744" key="22">
    <source>
        <dbReference type="PDB" id="7TCZ"/>
    </source>
</evidence>
<evidence type="ECO:0007829" key="23">
    <source>
        <dbReference type="PDB" id="1IED"/>
    </source>
</evidence>
<evidence type="ECO:0007829" key="24">
    <source>
        <dbReference type="PDB" id="1IEG"/>
    </source>
</evidence>
<evidence type="ECO:0007829" key="25">
    <source>
        <dbReference type="PDB" id="1JQ6"/>
    </source>
</evidence>
<evidence type="ECO:0007829" key="26">
    <source>
        <dbReference type="PDB" id="1JQ7"/>
    </source>
</evidence>
<evidence type="ECO:0007829" key="27">
    <source>
        <dbReference type="PDB" id="1LAY"/>
    </source>
</evidence>
<reference key="1">
    <citation type="journal article" date="1990" name="Curr. Top. Microbiol. Immunol.">
        <title>Analysis of the protein-coding content of the sequence of human cytomegalovirus strain AD169.</title>
        <authorList>
            <person name="Chee M.S."/>
            <person name="Bankier A.T."/>
            <person name="Beck S."/>
            <person name="Bohni R."/>
            <person name="Brown C.M."/>
            <person name="Cerny R."/>
            <person name="Horsnell T."/>
            <person name="Hutchison C.A. III"/>
            <person name="Kouzarides T."/>
            <person name="Martignetti J.A."/>
            <person name="Preddie E."/>
            <person name="Satchwell S.C."/>
            <person name="Tomlinson P."/>
            <person name="Weston K.M."/>
            <person name="Barrell B.G."/>
        </authorList>
    </citation>
    <scope>NUCLEOTIDE SEQUENCE [GENOMIC DNA]</scope>
</reference>
<reference key="2">
    <citation type="journal article" date="2003" name="J. Gen. Virol.">
        <title>The human cytomegalovirus genome revisited: comparison with the chimpanzee cytomegalovirus genome.</title>
        <authorList>
            <person name="Davison A.J."/>
            <person name="Dolan A."/>
            <person name="Akter P."/>
            <person name="Addison C."/>
            <person name="Dargan D.J."/>
            <person name="Alcendor D.J."/>
            <person name="McGeoch D.J."/>
            <person name="Hayward G.S."/>
        </authorList>
    </citation>
    <scope>GENOME REANNOTATION</scope>
</reference>
<reference key="3">
    <citation type="journal article" date="2003" name="J. Gen. Virol.">
        <authorList>
            <person name="Davison A.J."/>
            <person name="Dolan A."/>
            <person name="Akter P."/>
            <person name="Addison C."/>
            <person name="Dargan D.J."/>
            <person name="Alcendor D.J."/>
            <person name="McGeoch D.J."/>
            <person name="Hayward G.S."/>
        </authorList>
    </citation>
    <scope>ERRATUM OF PUBMED:12533697</scope>
</reference>
<reference key="4">
    <citation type="journal article" date="2002" name="J. Virol.">
        <title>Cytomegalovirus assemblin (pUL80a): cleavage at internal site not essential for virus growth; proteinase absent from virions.</title>
        <authorList>
            <person name="Chan C.K."/>
            <person name="Brignole E.J."/>
            <person name="Gibson W."/>
        </authorList>
    </citation>
    <scope>PROTEOLYTIC CLEAVAGE (CAPSID SCAFFOLDING PROTEIN)</scope>
</reference>
<reference key="5">
    <citation type="journal article" date="2004" name="J. Virol.">
        <title>Identification of proteins in human cytomegalovirus (HCMV) particles: the HCMV proteome.</title>
        <authorList>
            <person name="Varnum S.M."/>
            <person name="Streblow D.N."/>
            <person name="Monroe M.E."/>
            <person name="Smith P."/>
            <person name="Auberry K.J."/>
            <person name="Pasa-Tolic L."/>
            <person name="Wang D."/>
            <person name="Camp D.G. II"/>
            <person name="Rodland K."/>
            <person name="Wiley S."/>
            <person name="Britt W."/>
            <person name="Shenk T."/>
            <person name="Smith R.D."/>
            <person name="Nelson J.A."/>
        </authorList>
    </citation>
    <scope>IDENTIFICATION</scope>
</reference>
<reference key="6">
    <citation type="journal article" date="2004" name="J. Virol.">
        <authorList>
            <person name="Varnum S.M."/>
            <person name="Streblow D.N."/>
            <person name="Monroe M.E."/>
            <person name="Smith P."/>
            <person name="Auberry K.J."/>
            <person name="Pasa-Tolic L."/>
            <person name="Wang D."/>
            <person name="Camp D.G. II"/>
            <person name="Rodland K."/>
            <person name="Wiley S."/>
            <person name="Britt W."/>
            <person name="Shenk T."/>
            <person name="Smith R.D."/>
            <person name="Nelson J.A."/>
        </authorList>
    </citation>
    <scope>ERRATUM OF PUBMED:15452216</scope>
</reference>
<reference key="7">
    <citation type="journal article" date="1997" name="J. Virol.">
        <title>Human cytomegalovirus capsid assembly protein precursor (pUL80.5) interacts with itself and with the major capsid protein (pUL86) through two different domains.</title>
        <authorList>
            <person name="Wood L.J."/>
            <person name="Baxter M.K."/>
            <person name="Plafker S.M."/>
            <person name="Gibson W."/>
        </authorList>
    </citation>
    <scope>MULTIMERIZATION</scope>
    <scope>INTERACTION WITH UL86</scope>
</reference>
<reference key="8">
    <citation type="journal article" date="2008" name="Curr. Top. Microbiol. Immunol.">
        <title>Structure and formation of the cytomegalovirus virion.</title>
        <authorList>
            <person name="Gibson W."/>
        </authorList>
    </citation>
    <scope>REVIEW</scope>
    <scope>ISOFORM UL80.4 PROTEIN AND UL80.3 PROTEIN</scope>
</reference>
<reference key="9">
    <citation type="journal article" date="2017" name="J. Gen. Virol.">
        <title>Assemblins as maturational proteases in herpesviruses.</title>
        <authorList>
            <person name="Zuehlsdorf M."/>
            <person name="Hinrichs W."/>
        </authorList>
    </citation>
    <scope>REVIEW</scope>
</reference>
<reference evidence="21" key="10">
    <citation type="journal article" date="1996" name="Nature">
        <title>A new serine-protease fold revealed by the crystal structure of human cytomegalovirus protease.</title>
        <authorList>
            <person name="Tong L."/>
            <person name="Qian C."/>
            <person name="Massariol M.-J."/>
            <person name="Bonneau P.R."/>
            <person name="Cordingley M.G."/>
            <person name="Lagace L."/>
        </authorList>
    </citation>
    <scope>X-RAY CRYSTALLOGRAPHY (2.0 ANGSTROMS) OF PROTEASE</scope>
</reference>
<reference evidence="16" key="11">
    <citation type="journal article" date="1996" name="Nature">
        <title>Unique fold and active site in cytomegalovirus protease.</title>
        <authorList>
            <person name="Qiu X."/>
            <person name="Culp J.S."/>
            <person name="Dilella A.G."/>
            <person name="Hellmig B."/>
            <person name="Hoog S.S."/>
            <person name="Janson C.A."/>
            <person name="Smith W.W."/>
            <person name="Abdel-Meguid S.A."/>
        </authorList>
    </citation>
    <scope>X-RAY CRYSTALLOGRAPHY (2.5 ANGSTROMS) OF PROTEASE</scope>
</reference>
<reference key="12">
    <citation type="journal article" date="1996" name="Nature">
        <title>Three-dimensional structure of human cytomegalovirus protease.</title>
        <authorList>
            <person name="Shieh H.-S."/>
            <person name="Kurumbail R.G."/>
            <person name="Stevens A.M."/>
            <person name="Stegeman R.A."/>
            <person name="Sturman E.J."/>
            <person name="Pak J.Y."/>
            <person name="Wittwer A.J."/>
            <person name="Palmier M.O."/>
            <person name="Wiegand R.C."/>
            <person name="Holwerda B.C."/>
            <person name="Stallings W.C."/>
        </authorList>
    </citation>
    <scope>X-RAY CRYSTALLOGRAPHY (2.27 ANGSTROMS) OF PROTEASE</scope>
</reference>
<reference evidence="9 10 11 12 13" key="13">
    <citation type="journal article" date="2001" name="Biochemistry">
        <title>Investigating the role of histidine 157 in the catalytic activity of human cytomegalovirus protease.</title>
        <authorList>
            <person name="Khayat R."/>
            <person name="Batra R."/>
            <person name="Massariol M.J."/>
            <person name="Lagace L."/>
            <person name="Tong L."/>
        </authorList>
    </citation>
    <scope>X-RAY CRYSTALLOGRAPHY (2.00 ANGSTROMS) OF 1-256</scope>
    <scope>MUTAGENESIS OF SER-134 AND HIS-157</scope>
    <scope>CATALYTIC ACTIVITY (ASSEMBLIN)</scope>
    <scope>BIOPHYSICOCHEMICAL PROPERTIES (ASSEMBLIN)</scope>
    <scope>SUBUNIT (ASSEMBLIN)</scope>
</reference>
<reference evidence="14 15" key="14">
    <citation type="journal article" date="2001" name="Nat. Struct. Biol.">
        <title>Molecular mechanism for dimerization to regulate the catalytic activity of human cytomegalovirus protease.</title>
        <authorList>
            <person name="Batra R."/>
            <person name="Khayat R."/>
            <person name="Tong L."/>
        </authorList>
    </citation>
    <scope>X-RAY CRYSTALLOGRAPHY (2.30 ANGSTROMS) OF 1-256</scope>
    <scope>SUBUNIT (ASSEMBLIN)</scope>
    <scope>BIOPHYSICOCHEMICAL PROPERTIES (ASSEMBLIN)</scope>
    <scope>MUTAGENESIS OF SER-225; ASP-227 AND LEU-229</scope>
</reference>
<reference evidence="17 18 19 20" key="15">
    <citation type="journal article" date="2003" name="Biochemistry">
        <title>Structural and biochemical studies of inhibitor binding to human cytomegalovirus protease.</title>
        <authorList>
            <person name="Khayat R."/>
            <person name="Batra R."/>
            <person name="Qian C."/>
            <person name="Halmos T."/>
            <person name="Bailey M."/>
            <person name="Tong L."/>
        </authorList>
    </citation>
    <scope>X-RAY CRYSTALLOGRAPHY (2.50 ANGSTROMS) OF 1-256 IN COMPLEX WITH A PROTEASE INHIBITOR</scope>
</reference>
<reference evidence="22" key="16">
    <citation type="journal article" date="2022" name="Cell Chem. Biol.">
        <title>Inhibiting a dynamic viral protease by targeting a non-catalytic cysteine.</title>
        <authorList>
            <person name="Hulce K.R."/>
            <person name="Jaishankar P."/>
            <person name="Lee G.M."/>
            <person name="Bohn M.F."/>
            <person name="Connelly E.J."/>
            <person name="Wucherer K."/>
            <person name="Ongpipattanakul C."/>
            <person name="Volk R.F."/>
            <person name="Chuo S.W."/>
            <person name="Arkin M.R."/>
            <person name="Renslo A.R."/>
            <person name="Craik C.S."/>
        </authorList>
    </citation>
    <scope>X-RAY CRYSTALLOGRAPHY (2.67 ANGSTROMS) OF 1-256 IN COMPLEX WITH A PROTEASE INHIBITOR</scope>
</reference>
<organism>
    <name type="scientific">Human cytomegalovirus (strain AD169)</name>
    <name type="common">HHV-5</name>
    <name type="synonym">Human herpesvirus 5</name>
    <dbReference type="NCBI Taxonomy" id="10360"/>
    <lineage>
        <taxon>Viruses</taxon>
        <taxon>Duplodnaviria</taxon>
        <taxon>Heunggongvirae</taxon>
        <taxon>Peploviricota</taxon>
        <taxon>Herviviricetes</taxon>
        <taxon>Herpesvirales</taxon>
        <taxon>Orthoherpesviridae</taxon>
        <taxon>Betaherpesvirinae</taxon>
        <taxon>Cytomegalovirus</taxon>
        <taxon>Cytomegalovirus humanbeta5</taxon>
        <taxon>Human cytomegalovirus</taxon>
    </lineage>
</organism>
<gene>
    <name type="primary">UL80</name>
    <name type="synonym">APNG</name>
</gene>
<keyword id="KW-0002">3D-structure</keyword>
<keyword id="KW-0877">Alternative promoter usage</keyword>
<keyword id="KW-1035">Host cytoplasm</keyword>
<keyword id="KW-1048">Host nucleus</keyword>
<keyword id="KW-0378">Hydrolase</keyword>
<keyword id="KW-0597">Phosphoprotein</keyword>
<keyword id="KW-0645">Protease</keyword>
<keyword id="KW-1185">Reference proteome</keyword>
<keyword id="KW-0720">Serine protease</keyword>
<keyword id="KW-0118">Viral capsid assembly</keyword>
<keyword id="KW-1188">Viral release from host cell</keyword>
<proteinExistence type="evidence at protein level"/>
<feature type="chain" id="PRO_0000027284" description="Capsid scaffolding protein">
    <location>
        <begin position="1"/>
        <end position="708"/>
    </location>
</feature>
<feature type="chain" id="PRO_0000027285" description="Assemblin" evidence="1">
    <location>
        <begin position="1"/>
        <end position="256"/>
    </location>
</feature>
<feature type="chain" id="PRO_0000027286" description="Assembly protein" evidence="1">
    <location>
        <begin position="257"/>
        <end position="708"/>
    </location>
</feature>
<feature type="region of interest" description="Disordered" evidence="2">
    <location>
        <begin position="269"/>
        <end position="339"/>
    </location>
</feature>
<feature type="region of interest" description="Interaction with pAP" evidence="1">
    <location>
        <begin position="333"/>
        <end position="352"/>
    </location>
</feature>
<feature type="region of interest" description="Disordered" evidence="2">
    <location>
        <begin position="455"/>
        <end position="565"/>
    </location>
</feature>
<feature type="region of interest" description="Disordered" evidence="2">
    <location>
        <begin position="593"/>
        <end position="619"/>
    </location>
</feature>
<feature type="region of interest" description="Interaction with major capsid protein" evidence="1">
    <location>
        <begin position="688"/>
        <end position="708"/>
    </location>
</feature>
<feature type="short sequence motif" description="Nuclear localization signal 1">
    <location>
        <begin position="510"/>
        <end position="515"/>
    </location>
</feature>
<feature type="short sequence motif" description="Nuclear localization signal 2">
    <location>
        <begin position="537"/>
        <end position="543"/>
    </location>
</feature>
<feature type="compositionally biased region" description="Low complexity" evidence="2">
    <location>
        <begin position="284"/>
        <end position="293"/>
    </location>
</feature>
<feature type="compositionally biased region" description="Pro residues" evidence="2">
    <location>
        <begin position="294"/>
        <end position="311"/>
    </location>
</feature>
<feature type="compositionally biased region" description="Low complexity" evidence="2">
    <location>
        <begin position="326"/>
        <end position="339"/>
    </location>
</feature>
<feature type="compositionally biased region" description="Basic residues" evidence="2">
    <location>
        <begin position="498"/>
        <end position="513"/>
    </location>
</feature>
<feature type="compositionally biased region" description="Low complexity" evidence="2">
    <location>
        <begin position="593"/>
        <end position="611"/>
    </location>
</feature>
<feature type="active site" description="Charge relay system" evidence="1 7">
    <location>
        <position position="63"/>
    </location>
</feature>
<feature type="active site" description="Charge relay system" evidence="1 7">
    <location>
        <position position="132"/>
    </location>
</feature>
<feature type="active site" description="Charge relay system" evidence="1">
    <location>
        <position position="157"/>
    </location>
</feature>
<feature type="site" description="Cleavage; by assemblin; Internal site" evidence="5">
    <location>
        <begin position="143"/>
        <end position="144"/>
    </location>
</feature>
<feature type="site" description="Cleavage; by assemblin; Cryptic site" evidence="5">
    <location>
        <begin position="209"/>
        <end position="210"/>
    </location>
</feature>
<feature type="site" description="Cleavage; by assemblin; Release site" evidence="1">
    <location>
        <begin position="256"/>
        <end position="257"/>
    </location>
</feature>
<feature type="site" description="Cleavage; by assemblin; Maturation site">
    <location>
        <begin position="643"/>
        <end position="644"/>
    </location>
</feature>
<feature type="splice variant" id="VSP_037425" description="In isoform UL80.3 protein." evidence="8">
    <location>
        <begin position="1"/>
        <end position="477"/>
    </location>
</feature>
<feature type="splice variant" id="VSP_037424" description="In isoform UL80.4 protein." evidence="8">
    <location>
        <begin position="1"/>
        <end position="392"/>
    </location>
</feature>
<feature type="splice variant" id="VSP_037423" description="In isoform pAP." evidence="8">
    <location>
        <begin position="1"/>
        <end position="335"/>
    </location>
</feature>
<feature type="mutagenesis site" description="Almost complete loss of protease catalytic activity." evidence="3">
    <original>S</original>
    <variation>A</variation>
    <location>
        <position position="134"/>
    </location>
</feature>
<feature type="mutagenesis site" description="22-fold loss of protease catalytic activity.">
    <original>H</original>
    <variation>A</variation>
    <variation>Q</variation>
    <location>
        <position position="157"/>
    </location>
</feature>
<feature type="mutagenesis site" description="12-fold loss of protease catalytic activity." evidence="3">
    <original>H</original>
    <variation>E</variation>
    <location>
        <position position="157"/>
    </location>
</feature>
<feature type="mutagenesis site" description="150-fold reduced catalytic efficiency." evidence="6">
    <original>S</original>
    <variation>Y</variation>
    <location>
        <position position="225"/>
    </location>
</feature>
<feature type="mutagenesis site" description="1300-fold reduced catalytic efficiency." evidence="6">
    <original>D</original>
    <variation>N</variation>
    <location>
        <position position="227"/>
    </location>
</feature>
<feature type="mutagenesis site" description="1800-fold reduced catalytic efficiency." evidence="6">
    <original>L</original>
    <variation>R</variation>
    <location>
        <position position="229"/>
    </location>
</feature>
<feature type="helix" evidence="23">
    <location>
        <begin position="5"/>
        <end position="8"/>
    </location>
</feature>
<feature type="strand" evidence="23">
    <location>
        <begin position="14"/>
        <end position="22"/>
    </location>
</feature>
<feature type="helix" evidence="24">
    <location>
        <begin position="30"/>
        <end position="32"/>
    </location>
</feature>
<feature type="helix" evidence="23">
    <location>
        <begin position="36"/>
        <end position="42"/>
    </location>
</feature>
<feature type="strand" evidence="23">
    <location>
        <begin position="58"/>
        <end position="61"/>
    </location>
</feature>
<feature type="strand" evidence="23">
    <location>
        <begin position="64"/>
        <end position="78"/>
    </location>
</feature>
<feature type="strand" evidence="23">
    <location>
        <begin position="81"/>
        <end position="88"/>
    </location>
</feature>
<feature type="helix" evidence="23">
    <location>
        <begin position="91"/>
        <end position="101"/>
    </location>
</feature>
<feature type="helix" evidence="23">
    <location>
        <begin position="105"/>
        <end position="108"/>
    </location>
</feature>
<feature type="strand" evidence="27">
    <location>
        <begin position="112"/>
        <end position="115"/>
    </location>
</feature>
<feature type="helix" evidence="23">
    <location>
        <begin position="119"/>
        <end position="127"/>
    </location>
</feature>
<feature type="strand" evidence="23">
    <location>
        <begin position="130"/>
        <end position="133"/>
    </location>
</feature>
<feature type="strand" evidence="27">
    <location>
        <begin position="138"/>
        <end position="140"/>
    </location>
</feature>
<feature type="strand" evidence="23">
    <location>
        <begin position="158"/>
        <end position="163"/>
    </location>
</feature>
<feature type="strand" evidence="26">
    <location>
        <begin position="165"/>
        <end position="168"/>
    </location>
</feature>
<feature type="strand" evidence="23">
    <location>
        <begin position="172"/>
        <end position="175"/>
    </location>
</feature>
<feature type="helix" evidence="23">
    <location>
        <begin position="177"/>
        <end position="181"/>
    </location>
</feature>
<feature type="strand" evidence="26">
    <location>
        <begin position="184"/>
        <end position="186"/>
    </location>
</feature>
<feature type="helix" evidence="23">
    <location>
        <begin position="189"/>
        <end position="199"/>
    </location>
</feature>
<feature type="helix" evidence="25">
    <location>
        <begin position="200"/>
        <end position="204"/>
    </location>
</feature>
<feature type="helix" evidence="23">
    <location>
        <begin position="218"/>
        <end position="229"/>
    </location>
</feature>
<feature type="helix" evidence="23">
    <location>
        <begin position="234"/>
        <end position="244"/>
    </location>
</feature>
<feature type="helix" evidence="23">
    <location>
        <begin position="249"/>
        <end position="251"/>
    </location>
</feature>